<feature type="chain" id="PRO_0000145448" description="Type 2 DNA topoisomerase 6 subunit A">
    <location>
        <begin position="1"/>
        <end position="373"/>
    </location>
</feature>
<feature type="domain" description="Topo IIA-type catalytic" evidence="2">
    <location>
        <begin position="15"/>
        <end position="153"/>
    </location>
</feature>
<feature type="active site" description="O-(5'-phospho-DNA)-tyrosine intermediate" evidence="2">
    <location>
        <position position="110"/>
    </location>
</feature>
<feature type="binding site" evidence="1">
    <location>
        <position position="206"/>
    </location>
    <ligand>
        <name>Mg(2+)</name>
        <dbReference type="ChEBI" id="CHEBI:18420"/>
    </ligand>
</feature>
<feature type="binding site" evidence="1">
    <location>
        <position position="258"/>
    </location>
    <ligand>
        <name>Mg(2+)</name>
        <dbReference type="ChEBI" id="CHEBI:18420"/>
    </ligand>
</feature>
<accession>Q8TQF8</accession>
<sequence>MAGDVNNEVNSKKRQGDTLAKERLLGLAEKIYNQFEEEVIPSVSLPSRTKANIEYSDESDVWVYGDRESERSAKTVKGAFQLLKTTYATDFLINEHLAHNRGSTLRELYYISEGWDYAKFKEQAESDRLIEDLELLTSLQREYFHMRPEEDGATMFGPIEISELTKRGARNIHCQKDVGEGGYQIPFNVENIEFKNHDASMIIAIETGGMYARLMENGFDEAYNAILVHLKGQPARSTRRIIKRMNEELEIPVAVFTDGDPWSYRIYASVAYGAIKSAHLSEFMATPAARFLGLQPSDIVEYELSTDKLTEQDISALRSELSDPRFESEYWKEQIQLQLDIGKKAEQQAFAGKGLDFVTEVYLPNRLKELGMV</sequence>
<proteinExistence type="inferred from homology"/>
<gene>
    <name evidence="1" type="primary">top6A</name>
    <name type="ordered locus">MA_1586</name>
</gene>
<reference key="1">
    <citation type="journal article" date="2002" name="Genome Res.">
        <title>The genome of Methanosarcina acetivorans reveals extensive metabolic and physiological diversity.</title>
        <authorList>
            <person name="Galagan J.E."/>
            <person name="Nusbaum C."/>
            <person name="Roy A."/>
            <person name="Endrizzi M.G."/>
            <person name="Macdonald P."/>
            <person name="FitzHugh W."/>
            <person name="Calvo S."/>
            <person name="Engels R."/>
            <person name="Smirnov S."/>
            <person name="Atnoor D."/>
            <person name="Brown A."/>
            <person name="Allen N."/>
            <person name="Naylor J."/>
            <person name="Stange-Thomann N."/>
            <person name="DeArellano K."/>
            <person name="Johnson R."/>
            <person name="Linton L."/>
            <person name="McEwan P."/>
            <person name="McKernan K."/>
            <person name="Talamas J."/>
            <person name="Tirrell A."/>
            <person name="Ye W."/>
            <person name="Zimmer A."/>
            <person name="Barber R.D."/>
            <person name="Cann I."/>
            <person name="Graham D.E."/>
            <person name="Grahame D.A."/>
            <person name="Guss A.M."/>
            <person name="Hedderich R."/>
            <person name="Ingram-Smith C."/>
            <person name="Kuettner H.C."/>
            <person name="Krzycki J.A."/>
            <person name="Leigh J.A."/>
            <person name="Li W."/>
            <person name="Liu J."/>
            <person name="Mukhopadhyay B."/>
            <person name="Reeve J.N."/>
            <person name="Smith K."/>
            <person name="Springer T.A."/>
            <person name="Umayam L.A."/>
            <person name="White O."/>
            <person name="White R.H."/>
            <person name="de Macario E.C."/>
            <person name="Ferry J.G."/>
            <person name="Jarrell K.F."/>
            <person name="Jing H."/>
            <person name="Macario A.J.L."/>
            <person name="Paulsen I.T."/>
            <person name="Pritchett M."/>
            <person name="Sowers K.R."/>
            <person name="Swanson R.V."/>
            <person name="Zinder S.H."/>
            <person name="Lander E."/>
            <person name="Metcalf W.W."/>
            <person name="Birren B."/>
        </authorList>
    </citation>
    <scope>NUCLEOTIDE SEQUENCE [LARGE SCALE GENOMIC DNA]</scope>
    <source>
        <strain>ATCC 35395 / DSM 2834 / JCM 12185 / C2A</strain>
    </source>
</reference>
<evidence type="ECO:0000255" key="1">
    <source>
        <dbReference type="HAMAP-Rule" id="MF_00132"/>
    </source>
</evidence>
<evidence type="ECO:0000255" key="2">
    <source>
        <dbReference type="PROSITE-ProRule" id="PRU01385"/>
    </source>
</evidence>
<evidence type="ECO:0000305" key="3"/>
<organism>
    <name type="scientific">Methanosarcina acetivorans (strain ATCC 35395 / DSM 2834 / JCM 12185 / C2A)</name>
    <dbReference type="NCBI Taxonomy" id="188937"/>
    <lineage>
        <taxon>Archaea</taxon>
        <taxon>Methanobacteriati</taxon>
        <taxon>Methanobacteriota</taxon>
        <taxon>Stenosarchaea group</taxon>
        <taxon>Methanomicrobia</taxon>
        <taxon>Methanosarcinales</taxon>
        <taxon>Methanosarcinaceae</taxon>
        <taxon>Methanosarcina</taxon>
    </lineage>
</organism>
<dbReference type="EC" id="5.6.2.2" evidence="1"/>
<dbReference type="EMBL" id="AE010299">
    <property type="protein sequence ID" value="AAM04999.1"/>
    <property type="status" value="ALT_INIT"/>
    <property type="molecule type" value="Genomic_DNA"/>
</dbReference>
<dbReference type="RefSeq" id="WP_048065160.1">
    <property type="nucleotide sequence ID" value="NC_003552.1"/>
</dbReference>
<dbReference type="SMR" id="Q8TQF8"/>
<dbReference type="FunCoup" id="Q8TQF8">
    <property type="interactions" value="12"/>
</dbReference>
<dbReference type="STRING" id="188937.MA_1586"/>
<dbReference type="EnsemblBacteria" id="AAM04999">
    <property type="protein sequence ID" value="AAM04999"/>
    <property type="gene ID" value="MA_1586"/>
</dbReference>
<dbReference type="GeneID" id="1473474"/>
<dbReference type="KEGG" id="mac:MA_1586"/>
<dbReference type="HOGENOM" id="CLU_037229_1_0_2"/>
<dbReference type="InParanoid" id="Q8TQF8"/>
<dbReference type="OrthoDB" id="5866at2157"/>
<dbReference type="PhylomeDB" id="Q8TQF8"/>
<dbReference type="Proteomes" id="UP000002487">
    <property type="component" value="Chromosome"/>
</dbReference>
<dbReference type="GO" id="GO:0005694">
    <property type="term" value="C:chromosome"/>
    <property type="evidence" value="ECO:0007669"/>
    <property type="project" value="InterPro"/>
</dbReference>
<dbReference type="GO" id="GO:0005524">
    <property type="term" value="F:ATP binding"/>
    <property type="evidence" value="ECO:0007669"/>
    <property type="project" value="UniProtKB-KW"/>
</dbReference>
<dbReference type="GO" id="GO:0003677">
    <property type="term" value="F:DNA binding"/>
    <property type="evidence" value="ECO:0000318"/>
    <property type="project" value="GO_Central"/>
</dbReference>
<dbReference type="GO" id="GO:0003918">
    <property type="term" value="F:DNA topoisomerase type II (double strand cut, ATP-hydrolyzing) activity"/>
    <property type="evidence" value="ECO:0007669"/>
    <property type="project" value="UniProtKB-UniRule"/>
</dbReference>
<dbReference type="GO" id="GO:0000287">
    <property type="term" value="F:magnesium ion binding"/>
    <property type="evidence" value="ECO:0007669"/>
    <property type="project" value="UniProtKB-UniRule"/>
</dbReference>
<dbReference type="GO" id="GO:0006265">
    <property type="term" value="P:DNA topological change"/>
    <property type="evidence" value="ECO:0007669"/>
    <property type="project" value="UniProtKB-UniRule"/>
</dbReference>
<dbReference type="CDD" id="cd00223">
    <property type="entry name" value="TOPRIM_TopoIIB_SPO"/>
    <property type="match status" value="1"/>
</dbReference>
<dbReference type="FunFam" id="1.10.10.10:FF:000655">
    <property type="entry name" value="Type 2 DNA topoisomerase 6 subunit A"/>
    <property type="match status" value="1"/>
</dbReference>
<dbReference type="FunFam" id="3.40.1360.10:FF:000011">
    <property type="entry name" value="Type 2 DNA topoisomerase 6 subunit A"/>
    <property type="match status" value="1"/>
</dbReference>
<dbReference type="Gene3D" id="3.40.1360.10">
    <property type="match status" value="1"/>
</dbReference>
<dbReference type="Gene3D" id="1.10.10.10">
    <property type="entry name" value="Winged helix-like DNA-binding domain superfamily/Winged helix DNA-binding domain"/>
    <property type="match status" value="1"/>
</dbReference>
<dbReference type="HAMAP" id="MF_00132">
    <property type="entry name" value="Top6A"/>
    <property type="match status" value="1"/>
</dbReference>
<dbReference type="InterPro" id="IPR002815">
    <property type="entry name" value="Spo11/TopoVI_A"/>
</dbReference>
<dbReference type="InterPro" id="IPR013049">
    <property type="entry name" value="Spo11/TopoVI_A_N"/>
</dbReference>
<dbReference type="InterPro" id="IPR036078">
    <property type="entry name" value="Spo11/TopoVI_A_sf"/>
</dbReference>
<dbReference type="InterPro" id="IPR049333">
    <property type="entry name" value="Topo_VI_alpha"/>
</dbReference>
<dbReference type="InterPro" id="IPR004085">
    <property type="entry name" value="TopoVI_A"/>
</dbReference>
<dbReference type="InterPro" id="IPR034136">
    <property type="entry name" value="TOPRIM_Topo6A/Spo11"/>
</dbReference>
<dbReference type="InterPro" id="IPR036388">
    <property type="entry name" value="WH-like_DNA-bd_sf"/>
</dbReference>
<dbReference type="NCBIfam" id="NF003332">
    <property type="entry name" value="PRK04342.1-1"/>
    <property type="match status" value="1"/>
</dbReference>
<dbReference type="PANTHER" id="PTHR10848">
    <property type="entry name" value="MEIOTIC RECOMBINATION PROTEIN SPO11"/>
    <property type="match status" value="1"/>
</dbReference>
<dbReference type="PANTHER" id="PTHR10848:SF0">
    <property type="entry name" value="MEIOTIC RECOMBINATION PROTEIN SPO11"/>
    <property type="match status" value="1"/>
</dbReference>
<dbReference type="Pfam" id="PF21180">
    <property type="entry name" value="TOP6A-Spo11_Toprim"/>
    <property type="match status" value="1"/>
</dbReference>
<dbReference type="Pfam" id="PF20768">
    <property type="entry name" value="Topo_VI_alpha"/>
    <property type="match status" value="1"/>
</dbReference>
<dbReference type="Pfam" id="PF04406">
    <property type="entry name" value="TP6A_N"/>
    <property type="match status" value="1"/>
</dbReference>
<dbReference type="PRINTS" id="PR01550">
    <property type="entry name" value="TOP6AFAMILY"/>
</dbReference>
<dbReference type="PRINTS" id="PR01552">
    <property type="entry name" value="TPISMRASE6A"/>
</dbReference>
<dbReference type="SUPFAM" id="SSF56726">
    <property type="entry name" value="DNA topoisomerase IV, alpha subunit"/>
    <property type="match status" value="1"/>
</dbReference>
<dbReference type="PROSITE" id="PS52041">
    <property type="entry name" value="TOPO_IIB"/>
    <property type="match status" value="1"/>
</dbReference>
<protein>
    <recommendedName>
        <fullName evidence="1">Type 2 DNA topoisomerase 6 subunit A</fullName>
        <ecNumber evidence="1">5.6.2.2</ecNumber>
    </recommendedName>
    <alternativeName>
        <fullName evidence="1">Type II DNA topoisomerase VI subunit A</fullName>
    </alternativeName>
</protein>
<name>TOP6A_METAC</name>
<comment type="function">
    <text evidence="1">Relaxes both positive and negative superturns and exhibits a strong decatenase activity.</text>
</comment>
<comment type="catalytic activity">
    <reaction evidence="1">
        <text>ATP-dependent breakage, passage and rejoining of double-stranded DNA.</text>
        <dbReference type="EC" id="5.6.2.2"/>
    </reaction>
</comment>
<comment type="cofactor">
    <cofactor evidence="1">
        <name>Mg(2+)</name>
        <dbReference type="ChEBI" id="CHEBI:18420"/>
    </cofactor>
</comment>
<comment type="subunit">
    <text evidence="1">Homodimer. Heterotetramer of two Top6A and two Top6B chains.</text>
</comment>
<comment type="similarity">
    <text evidence="1">Belongs to the TOP6A family.</text>
</comment>
<comment type="sequence caution" evidence="3">
    <conflict type="erroneous initiation">
        <sequence resource="EMBL-CDS" id="AAM04999"/>
    </conflict>
</comment>
<keyword id="KW-0067">ATP-binding</keyword>
<keyword id="KW-0238">DNA-binding</keyword>
<keyword id="KW-0413">Isomerase</keyword>
<keyword id="KW-0460">Magnesium</keyword>
<keyword id="KW-0479">Metal-binding</keyword>
<keyword id="KW-0547">Nucleotide-binding</keyword>
<keyword id="KW-1185">Reference proteome</keyword>
<keyword id="KW-0799">Topoisomerase</keyword>